<accession>A4Y022</accession>
<proteinExistence type="inferred from homology"/>
<name>COAD_ECTM1</name>
<comment type="function">
    <text evidence="1">Reversibly transfers an adenylyl group from ATP to 4'-phosphopantetheine, yielding dephospho-CoA (dPCoA) and pyrophosphate.</text>
</comment>
<comment type="catalytic activity">
    <reaction evidence="1">
        <text>(R)-4'-phosphopantetheine + ATP + H(+) = 3'-dephospho-CoA + diphosphate</text>
        <dbReference type="Rhea" id="RHEA:19801"/>
        <dbReference type="ChEBI" id="CHEBI:15378"/>
        <dbReference type="ChEBI" id="CHEBI:30616"/>
        <dbReference type="ChEBI" id="CHEBI:33019"/>
        <dbReference type="ChEBI" id="CHEBI:57328"/>
        <dbReference type="ChEBI" id="CHEBI:61723"/>
        <dbReference type="EC" id="2.7.7.3"/>
    </reaction>
</comment>
<comment type="cofactor">
    <cofactor evidence="1">
        <name>Mg(2+)</name>
        <dbReference type="ChEBI" id="CHEBI:18420"/>
    </cofactor>
</comment>
<comment type="pathway">
    <text evidence="1">Cofactor biosynthesis; coenzyme A biosynthesis; CoA from (R)-pantothenate: step 4/5.</text>
</comment>
<comment type="subunit">
    <text evidence="1">Homohexamer.</text>
</comment>
<comment type="subcellular location">
    <subcellularLocation>
        <location evidence="1">Cytoplasm</location>
    </subcellularLocation>
</comment>
<comment type="similarity">
    <text evidence="1">Belongs to the bacterial CoaD family.</text>
</comment>
<dbReference type="EC" id="2.7.7.3" evidence="1"/>
<dbReference type="EMBL" id="CP000680">
    <property type="protein sequence ID" value="ABP86938.1"/>
    <property type="molecule type" value="Genomic_DNA"/>
</dbReference>
<dbReference type="SMR" id="A4Y022"/>
<dbReference type="STRING" id="399739.Pmen_4191"/>
<dbReference type="KEGG" id="pmy:Pmen_4191"/>
<dbReference type="PATRIC" id="fig|399739.8.peg.4243"/>
<dbReference type="eggNOG" id="COG0669">
    <property type="taxonomic scope" value="Bacteria"/>
</dbReference>
<dbReference type="HOGENOM" id="CLU_100149_0_1_6"/>
<dbReference type="OrthoDB" id="9806661at2"/>
<dbReference type="UniPathway" id="UPA00241">
    <property type="reaction ID" value="UER00355"/>
</dbReference>
<dbReference type="GO" id="GO:0005737">
    <property type="term" value="C:cytoplasm"/>
    <property type="evidence" value="ECO:0007669"/>
    <property type="project" value="UniProtKB-SubCell"/>
</dbReference>
<dbReference type="GO" id="GO:0005524">
    <property type="term" value="F:ATP binding"/>
    <property type="evidence" value="ECO:0007669"/>
    <property type="project" value="UniProtKB-KW"/>
</dbReference>
<dbReference type="GO" id="GO:0004595">
    <property type="term" value="F:pantetheine-phosphate adenylyltransferase activity"/>
    <property type="evidence" value="ECO:0007669"/>
    <property type="project" value="UniProtKB-UniRule"/>
</dbReference>
<dbReference type="GO" id="GO:0015937">
    <property type="term" value="P:coenzyme A biosynthetic process"/>
    <property type="evidence" value="ECO:0007669"/>
    <property type="project" value="UniProtKB-UniRule"/>
</dbReference>
<dbReference type="CDD" id="cd02163">
    <property type="entry name" value="PPAT"/>
    <property type="match status" value="1"/>
</dbReference>
<dbReference type="Gene3D" id="3.40.50.620">
    <property type="entry name" value="HUPs"/>
    <property type="match status" value="1"/>
</dbReference>
<dbReference type="HAMAP" id="MF_00151">
    <property type="entry name" value="PPAT_bact"/>
    <property type="match status" value="1"/>
</dbReference>
<dbReference type="InterPro" id="IPR004821">
    <property type="entry name" value="Cyt_trans-like"/>
</dbReference>
<dbReference type="InterPro" id="IPR001980">
    <property type="entry name" value="PPAT"/>
</dbReference>
<dbReference type="InterPro" id="IPR014729">
    <property type="entry name" value="Rossmann-like_a/b/a_fold"/>
</dbReference>
<dbReference type="NCBIfam" id="TIGR01510">
    <property type="entry name" value="coaD_prev_kdtB"/>
    <property type="match status" value="1"/>
</dbReference>
<dbReference type="NCBIfam" id="TIGR00125">
    <property type="entry name" value="cyt_tran_rel"/>
    <property type="match status" value="1"/>
</dbReference>
<dbReference type="PANTHER" id="PTHR21342">
    <property type="entry name" value="PHOSPHOPANTETHEINE ADENYLYLTRANSFERASE"/>
    <property type="match status" value="1"/>
</dbReference>
<dbReference type="PANTHER" id="PTHR21342:SF1">
    <property type="entry name" value="PHOSPHOPANTETHEINE ADENYLYLTRANSFERASE"/>
    <property type="match status" value="1"/>
</dbReference>
<dbReference type="Pfam" id="PF01467">
    <property type="entry name" value="CTP_transf_like"/>
    <property type="match status" value="1"/>
</dbReference>
<dbReference type="PRINTS" id="PR01020">
    <property type="entry name" value="LPSBIOSNTHSS"/>
</dbReference>
<dbReference type="SUPFAM" id="SSF52374">
    <property type="entry name" value="Nucleotidylyl transferase"/>
    <property type="match status" value="1"/>
</dbReference>
<feature type="chain" id="PRO_1000011209" description="Phosphopantetheine adenylyltransferase">
    <location>
        <begin position="1"/>
        <end position="160"/>
    </location>
</feature>
<feature type="binding site" evidence="1">
    <location>
        <begin position="9"/>
        <end position="10"/>
    </location>
    <ligand>
        <name>ATP</name>
        <dbReference type="ChEBI" id="CHEBI:30616"/>
    </ligand>
</feature>
<feature type="binding site" evidence="1">
    <location>
        <position position="9"/>
    </location>
    <ligand>
        <name>substrate</name>
    </ligand>
</feature>
<feature type="binding site" evidence="1">
    <location>
        <position position="17"/>
    </location>
    <ligand>
        <name>ATP</name>
        <dbReference type="ChEBI" id="CHEBI:30616"/>
    </ligand>
</feature>
<feature type="binding site" evidence="1">
    <location>
        <position position="41"/>
    </location>
    <ligand>
        <name>substrate</name>
    </ligand>
</feature>
<feature type="binding site" evidence="1">
    <location>
        <position position="73"/>
    </location>
    <ligand>
        <name>substrate</name>
    </ligand>
</feature>
<feature type="binding site" evidence="1">
    <location>
        <position position="87"/>
    </location>
    <ligand>
        <name>substrate</name>
    </ligand>
</feature>
<feature type="binding site" evidence="1">
    <location>
        <begin position="88"/>
        <end position="90"/>
    </location>
    <ligand>
        <name>ATP</name>
        <dbReference type="ChEBI" id="CHEBI:30616"/>
    </ligand>
</feature>
<feature type="binding site" evidence="1">
    <location>
        <position position="98"/>
    </location>
    <ligand>
        <name>ATP</name>
        <dbReference type="ChEBI" id="CHEBI:30616"/>
    </ligand>
</feature>
<feature type="binding site" evidence="1">
    <location>
        <begin position="123"/>
        <end position="129"/>
    </location>
    <ligand>
        <name>ATP</name>
        <dbReference type="ChEBI" id="CHEBI:30616"/>
    </ligand>
</feature>
<feature type="site" description="Transition state stabilizer" evidence="1">
    <location>
        <position position="17"/>
    </location>
</feature>
<organism>
    <name type="scientific">Ectopseudomonas mendocina (strain ymp)</name>
    <name type="common">Pseudomonas mendocina</name>
    <dbReference type="NCBI Taxonomy" id="399739"/>
    <lineage>
        <taxon>Bacteria</taxon>
        <taxon>Pseudomonadati</taxon>
        <taxon>Pseudomonadota</taxon>
        <taxon>Gammaproteobacteria</taxon>
        <taxon>Pseudomonadales</taxon>
        <taxon>Pseudomonadaceae</taxon>
        <taxon>Ectopseudomonas</taxon>
    </lineage>
</organism>
<sequence length="160" mass="17805">MNRVLYPGTFDPITKGHGDLVERAARLFDHVIIAVAASPKKNPLFPLEQRVELAREVTKHLPNVEVVGFSSLLAHFVKEQGANVFLRGLRAVSDFEYEFQLANMNRQLAPDVESLFLTPSEKYSFISSTLVREIAALGGDISKFVHPAVADALNARFQKN</sequence>
<evidence type="ECO:0000255" key="1">
    <source>
        <dbReference type="HAMAP-Rule" id="MF_00151"/>
    </source>
</evidence>
<protein>
    <recommendedName>
        <fullName evidence="1">Phosphopantetheine adenylyltransferase</fullName>
        <ecNumber evidence="1">2.7.7.3</ecNumber>
    </recommendedName>
    <alternativeName>
        <fullName evidence="1">Dephospho-CoA pyrophosphorylase</fullName>
    </alternativeName>
    <alternativeName>
        <fullName evidence="1">Pantetheine-phosphate adenylyltransferase</fullName>
        <shortName evidence="1">PPAT</shortName>
    </alternativeName>
</protein>
<gene>
    <name evidence="1" type="primary">coaD</name>
    <name type="ordered locus">Pmen_4191</name>
</gene>
<reference key="1">
    <citation type="submission" date="2007-04" db="EMBL/GenBank/DDBJ databases">
        <title>Complete sequence of Pseudomonas mendocina ymp.</title>
        <authorList>
            <consortium name="US DOE Joint Genome Institute"/>
            <person name="Copeland A."/>
            <person name="Lucas S."/>
            <person name="Lapidus A."/>
            <person name="Barry K."/>
            <person name="Glavina del Rio T."/>
            <person name="Dalin E."/>
            <person name="Tice H."/>
            <person name="Pitluck S."/>
            <person name="Kiss H."/>
            <person name="Brettin T."/>
            <person name="Detter J.C."/>
            <person name="Bruce D."/>
            <person name="Han C."/>
            <person name="Schmutz J."/>
            <person name="Larimer F."/>
            <person name="Land M."/>
            <person name="Hauser L."/>
            <person name="Kyrpides N."/>
            <person name="Mikhailova N."/>
            <person name="Hersman L."/>
            <person name="Dubois J."/>
            <person name="Maurice P."/>
            <person name="Richardson P."/>
        </authorList>
    </citation>
    <scope>NUCLEOTIDE SEQUENCE [LARGE SCALE GENOMIC DNA]</scope>
    <source>
        <strain>ymp</strain>
    </source>
</reference>
<keyword id="KW-0067">ATP-binding</keyword>
<keyword id="KW-0173">Coenzyme A biosynthesis</keyword>
<keyword id="KW-0963">Cytoplasm</keyword>
<keyword id="KW-0460">Magnesium</keyword>
<keyword id="KW-0547">Nucleotide-binding</keyword>
<keyword id="KW-0548">Nucleotidyltransferase</keyword>
<keyword id="KW-0808">Transferase</keyword>